<comment type="function">
    <text evidence="1">Catalyzes the condensation of ATP and 5-phosphoribose 1-diphosphate to form N'-(5'-phosphoribosyl)-ATP (PR-ATP). Has a crucial role in the pathway because the rate of histidine biosynthesis seems to be controlled primarily by regulation of HisG enzymatic activity.</text>
</comment>
<comment type="catalytic activity">
    <reaction evidence="1">
        <text>1-(5-phospho-beta-D-ribosyl)-ATP + diphosphate = 5-phospho-alpha-D-ribose 1-diphosphate + ATP</text>
        <dbReference type="Rhea" id="RHEA:18473"/>
        <dbReference type="ChEBI" id="CHEBI:30616"/>
        <dbReference type="ChEBI" id="CHEBI:33019"/>
        <dbReference type="ChEBI" id="CHEBI:58017"/>
        <dbReference type="ChEBI" id="CHEBI:73183"/>
        <dbReference type="EC" id="2.4.2.17"/>
    </reaction>
</comment>
<comment type="cofactor">
    <cofactor evidence="1">
        <name>Mg(2+)</name>
        <dbReference type="ChEBI" id="CHEBI:18420"/>
    </cofactor>
</comment>
<comment type="activity regulation">
    <text evidence="1">Feedback inhibited by histidine.</text>
</comment>
<comment type="pathway">
    <text evidence="1">Amino-acid biosynthesis; L-histidine biosynthesis; L-histidine from 5-phospho-alpha-D-ribose 1-diphosphate: step 1/9.</text>
</comment>
<comment type="subcellular location">
    <subcellularLocation>
        <location evidence="1">Cytoplasm</location>
    </subcellularLocation>
</comment>
<comment type="similarity">
    <text evidence="1">Belongs to the ATP phosphoribosyltransferase family. Long subfamily.</text>
</comment>
<keyword id="KW-0028">Amino-acid biosynthesis</keyword>
<keyword id="KW-0067">ATP-binding</keyword>
<keyword id="KW-0963">Cytoplasm</keyword>
<keyword id="KW-0328">Glycosyltransferase</keyword>
<keyword id="KW-0368">Histidine biosynthesis</keyword>
<keyword id="KW-0460">Magnesium</keyword>
<keyword id="KW-0479">Metal-binding</keyword>
<keyword id="KW-0547">Nucleotide-binding</keyword>
<keyword id="KW-1185">Reference proteome</keyword>
<keyword id="KW-0808">Transferase</keyword>
<proteinExistence type="inferred from homology"/>
<evidence type="ECO:0000255" key="1">
    <source>
        <dbReference type="HAMAP-Rule" id="MF_00079"/>
    </source>
</evidence>
<reference key="1">
    <citation type="journal article" date="2010" name="J. Bacteriol.">
        <title>Genome sequence of the Fleming strain of Micrococcus luteus, a simple free-living actinobacterium.</title>
        <authorList>
            <person name="Young M."/>
            <person name="Artsatbanov V."/>
            <person name="Beller H.R."/>
            <person name="Chandra G."/>
            <person name="Chater K.F."/>
            <person name="Dover L.G."/>
            <person name="Goh E.B."/>
            <person name="Kahan T."/>
            <person name="Kaprelyants A.S."/>
            <person name="Kyrpides N."/>
            <person name="Lapidus A."/>
            <person name="Lowry S.R."/>
            <person name="Lykidis A."/>
            <person name="Mahillon J."/>
            <person name="Markowitz V."/>
            <person name="Mavromatis K."/>
            <person name="Mukamolova G.V."/>
            <person name="Oren A."/>
            <person name="Rokem J.S."/>
            <person name="Smith M.C."/>
            <person name="Young D.I."/>
            <person name="Greenblatt C.L."/>
        </authorList>
    </citation>
    <scope>NUCLEOTIDE SEQUENCE [LARGE SCALE GENOMIC DNA]</scope>
    <source>
        <strain>ATCC 4698 / DSM 20030 / JCM 1464 / CCM 169 / CCUG 5858 / IAM 1056 / NBRC 3333 / NCIMB 9278 / NCTC 2665 / VKM Ac-2230</strain>
    </source>
</reference>
<organism>
    <name type="scientific">Micrococcus luteus (strain ATCC 4698 / DSM 20030 / JCM 1464 / CCM 169 / CCUG 5858 / IAM 1056 / NBRC 3333 / NCIMB 9278 / NCTC 2665 / VKM Ac-2230)</name>
    <name type="common">Micrococcus lysodeikticus</name>
    <dbReference type="NCBI Taxonomy" id="465515"/>
    <lineage>
        <taxon>Bacteria</taxon>
        <taxon>Bacillati</taxon>
        <taxon>Actinomycetota</taxon>
        <taxon>Actinomycetes</taxon>
        <taxon>Micrococcales</taxon>
        <taxon>Micrococcaceae</taxon>
        <taxon>Micrococcus</taxon>
    </lineage>
</organism>
<gene>
    <name evidence="1" type="primary">hisG</name>
    <name type="ordered locus">Mlut_10900</name>
</gene>
<accession>C5CBK0</accession>
<protein>
    <recommendedName>
        <fullName evidence="1">ATP phosphoribosyltransferase</fullName>
        <shortName evidence="1">ATP-PRT</shortName>
        <shortName evidence="1">ATP-PRTase</shortName>
        <ecNumber evidence="1">2.4.2.17</ecNumber>
    </recommendedName>
</protein>
<feature type="chain" id="PRO_1000202534" description="ATP phosphoribosyltransferase">
    <location>
        <begin position="1"/>
        <end position="282"/>
    </location>
</feature>
<name>HIS1_MICLC</name>
<sequence>MLRIAVPNKGALAEAAREILQEAGYRQRRDSRELVLVDPENQVEFFYLRPRDIAVYVGKGTLDVGLTGRDLFRDAQVEGTAEEIMALGFGRSVFRLAAPVGTFSSESELTGRRIATSYDGLLHAYLERTGLDAEVVHLDGAVESSVKLGVADAIADVVETGSTLRAAGMEVFGESILDSEAVLICRAGERPEGLDVLLRRLKGVLVARRWVMIDYDIRRDLLEAATAVTPGLESPTVSPLRDETMVAVRSMVRKPDANRVMDELYALGARGILISAIHAIRL</sequence>
<dbReference type="EC" id="2.4.2.17" evidence="1"/>
<dbReference type="EMBL" id="CP001628">
    <property type="protein sequence ID" value="ACS30597.1"/>
    <property type="molecule type" value="Genomic_DNA"/>
</dbReference>
<dbReference type="RefSeq" id="WP_010078766.1">
    <property type="nucleotide sequence ID" value="NC_012803.1"/>
</dbReference>
<dbReference type="SMR" id="C5CBK0"/>
<dbReference type="STRING" id="465515.Mlut_10900"/>
<dbReference type="EnsemblBacteria" id="ACS30597">
    <property type="protein sequence ID" value="ACS30597"/>
    <property type="gene ID" value="Mlut_10900"/>
</dbReference>
<dbReference type="GeneID" id="93345247"/>
<dbReference type="KEGG" id="mlu:Mlut_10900"/>
<dbReference type="PATRIC" id="fig|465515.4.peg.1033"/>
<dbReference type="eggNOG" id="COG0040">
    <property type="taxonomic scope" value="Bacteria"/>
</dbReference>
<dbReference type="HOGENOM" id="CLU_038115_1_1_11"/>
<dbReference type="UniPathway" id="UPA00031">
    <property type="reaction ID" value="UER00006"/>
</dbReference>
<dbReference type="Proteomes" id="UP000000738">
    <property type="component" value="Chromosome"/>
</dbReference>
<dbReference type="GO" id="GO:0005737">
    <property type="term" value="C:cytoplasm"/>
    <property type="evidence" value="ECO:0007669"/>
    <property type="project" value="UniProtKB-SubCell"/>
</dbReference>
<dbReference type="GO" id="GO:0005524">
    <property type="term" value="F:ATP binding"/>
    <property type="evidence" value="ECO:0007669"/>
    <property type="project" value="UniProtKB-KW"/>
</dbReference>
<dbReference type="GO" id="GO:0003879">
    <property type="term" value="F:ATP phosphoribosyltransferase activity"/>
    <property type="evidence" value="ECO:0007669"/>
    <property type="project" value="UniProtKB-UniRule"/>
</dbReference>
<dbReference type="GO" id="GO:0000287">
    <property type="term" value="F:magnesium ion binding"/>
    <property type="evidence" value="ECO:0007669"/>
    <property type="project" value="UniProtKB-UniRule"/>
</dbReference>
<dbReference type="GO" id="GO:0000105">
    <property type="term" value="P:L-histidine biosynthetic process"/>
    <property type="evidence" value="ECO:0007669"/>
    <property type="project" value="UniProtKB-UniRule"/>
</dbReference>
<dbReference type="CDD" id="cd13591">
    <property type="entry name" value="PBP2_HisGL1"/>
    <property type="match status" value="1"/>
</dbReference>
<dbReference type="Gene3D" id="3.30.70.120">
    <property type="match status" value="1"/>
</dbReference>
<dbReference type="Gene3D" id="3.40.190.10">
    <property type="entry name" value="Periplasmic binding protein-like II"/>
    <property type="match status" value="2"/>
</dbReference>
<dbReference type="HAMAP" id="MF_00079">
    <property type="entry name" value="HisG_Long"/>
    <property type="match status" value="1"/>
</dbReference>
<dbReference type="InterPro" id="IPR020621">
    <property type="entry name" value="ATP-PRT_HisG_long"/>
</dbReference>
<dbReference type="InterPro" id="IPR013820">
    <property type="entry name" value="ATP_PRibTrfase_cat"/>
</dbReference>
<dbReference type="InterPro" id="IPR018198">
    <property type="entry name" value="ATP_PRibTrfase_CS"/>
</dbReference>
<dbReference type="InterPro" id="IPR001348">
    <property type="entry name" value="ATP_PRibTrfase_HisG"/>
</dbReference>
<dbReference type="InterPro" id="IPR013115">
    <property type="entry name" value="HisG_C"/>
</dbReference>
<dbReference type="InterPro" id="IPR011322">
    <property type="entry name" value="N-reg_PII-like_a/b"/>
</dbReference>
<dbReference type="InterPro" id="IPR015867">
    <property type="entry name" value="N-reg_PII/ATP_PRibTrfase_C"/>
</dbReference>
<dbReference type="NCBIfam" id="TIGR00070">
    <property type="entry name" value="hisG"/>
    <property type="match status" value="1"/>
</dbReference>
<dbReference type="NCBIfam" id="TIGR03455">
    <property type="entry name" value="HisG_C-term"/>
    <property type="match status" value="1"/>
</dbReference>
<dbReference type="PANTHER" id="PTHR21403:SF8">
    <property type="entry name" value="ATP PHOSPHORIBOSYLTRANSFERASE"/>
    <property type="match status" value="1"/>
</dbReference>
<dbReference type="PANTHER" id="PTHR21403">
    <property type="entry name" value="ATP PHOSPHORIBOSYLTRANSFERASE ATP-PRTASE"/>
    <property type="match status" value="1"/>
</dbReference>
<dbReference type="Pfam" id="PF01634">
    <property type="entry name" value="HisG"/>
    <property type="match status" value="1"/>
</dbReference>
<dbReference type="Pfam" id="PF08029">
    <property type="entry name" value="HisG_C"/>
    <property type="match status" value="1"/>
</dbReference>
<dbReference type="SUPFAM" id="SSF54913">
    <property type="entry name" value="GlnB-like"/>
    <property type="match status" value="1"/>
</dbReference>
<dbReference type="SUPFAM" id="SSF53850">
    <property type="entry name" value="Periplasmic binding protein-like II"/>
    <property type="match status" value="1"/>
</dbReference>
<dbReference type="PROSITE" id="PS01316">
    <property type="entry name" value="ATP_P_PHORIBOSYLTR"/>
    <property type="match status" value="1"/>
</dbReference>